<feature type="chain" id="PRO_0000270652" description="Large ribosomal subunit protein bL21">
    <location>
        <begin position="1"/>
        <end position="96"/>
    </location>
</feature>
<evidence type="ECO:0000255" key="1">
    <source>
        <dbReference type="HAMAP-Rule" id="MF_01363"/>
    </source>
</evidence>
<evidence type="ECO:0000305" key="2"/>
<protein>
    <recommendedName>
        <fullName evidence="1">Large ribosomal subunit protein bL21</fullName>
    </recommendedName>
    <alternativeName>
        <fullName evidence="2">50S ribosomal protein L21</fullName>
    </alternativeName>
</protein>
<keyword id="KW-0687">Ribonucleoprotein</keyword>
<keyword id="KW-0689">Ribosomal protein</keyword>
<keyword id="KW-0694">RNA-binding</keyword>
<keyword id="KW-0699">rRNA-binding</keyword>
<proteinExistence type="inferred from homology"/>
<dbReference type="EMBL" id="CP000108">
    <property type="protein sequence ID" value="ABB28129.1"/>
    <property type="molecule type" value="Genomic_DNA"/>
</dbReference>
<dbReference type="SMR" id="Q3AS96"/>
<dbReference type="STRING" id="340177.Cag_0864"/>
<dbReference type="KEGG" id="cch:Cag_0864"/>
<dbReference type="eggNOG" id="COG0261">
    <property type="taxonomic scope" value="Bacteria"/>
</dbReference>
<dbReference type="HOGENOM" id="CLU_061463_3_2_10"/>
<dbReference type="OrthoDB" id="9813334at2"/>
<dbReference type="GO" id="GO:0005737">
    <property type="term" value="C:cytoplasm"/>
    <property type="evidence" value="ECO:0007669"/>
    <property type="project" value="UniProtKB-ARBA"/>
</dbReference>
<dbReference type="GO" id="GO:1990904">
    <property type="term" value="C:ribonucleoprotein complex"/>
    <property type="evidence" value="ECO:0007669"/>
    <property type="project" value="UniProtKB-KW"/>
</dbReference>
<dbReference type="GO" id="GO:0005840">
    <property type="term" value="C:ribosome"/>
    <property type="evidence" value="ECO:0007669"/>
    <property type="project" value="UniProtKB-KW"/>
</dbReference>
<dbReference type="GO" id="GO:0019843">
    <property type="term" value="F:rRNA binding"/>
    <property type="evidence" value="ECO:0007669"/>
    <property type="project" value="UniProtKB-UniRule"/>
</dbReference>
<dbReference type="GO" id="GO:0003735">
    <property type="term" value="F:structural constituent of ribosome"/>
    <property type="evidence" value="ECO:0007669"/>
    <property type="project" value="InterPro"/>
</dbReference>
<dbReference type="GO" id="GO:0006412">
    <property type="term" value="P:translation"/>
    <property type="evidence" value="ECO:0007669"/>
    <property type="project" value="UniProtKB-UniRule"/>
</dbReference>
<dbReference type="HAMAP" id="MF_01363">
    <property type="entry name" value="Ribosomal_bL21"/>
    <property type="match status" value="1"/>
</dbReference>
<dbReference type="InterPro" id="IPR028909">
    <property type="entry name" value="bL21-like"/>
</dbReference>
<dbReference type="InterPro" id="IPR036164">
    <property type="entry name" value="bL21-like_sf"/>
</dbReference>
<dbReference type="InterPro" id="IPR001787">
    <property type="entry name" value="Ribosomal_bL21"/>
</dbReference>
<dbReference type="InterPro" id="IPR018258">
    <property type="entry name" value="Ribosomal_bL21_CS"/>
</dbReference>
<dbReference type="NCBIfam" id="TIGR00061">
    <property type="entry name" value="L21"/>
    <property type="match status" value="1"/>
</dbReference>
<dbReference type="PANTHER" id="PTHR21349">
    <property type="entry name" value="50S RIBOSOMAL PROTEIN L21"/>
    <property type="match status" value="1"/>
</dbReference>
<dbReference type="PANTHER" id="PTHR21349:SF0">
    <property type="entry name" value="LARGE RIBOSOMAL SUBUNIT PROTEIN BL21M"/>
    <property type="match status" value="1"/>
</dbReference>
<dbReference type="Pfam" id="PF00829">
    <property type="entry name" value="Ribosomal_L21p"/>
    <property type="match status" value="1"/>
</dbReference>
<dbReference type="SUPFAM" id="SSF141091">
    <property type="entry name" value="L21p-like"/>
    <property type="match status" value="1"/>
</dbReference>
<dbReference type="PROSITE" id="PS01169">
    <property type="entry name" value="RIBOSOMAL_L21"/>
    <property type="match status" value="1"/>
</dbReference>
<organism>
    <name type="scientific">Chlorobium chlorochromatii (strain CaD3)</name>
    <dbReference type="NCBI Taxonomy" id="340177"/>
    <lineage>
        <taxon>Bacteria</taxon>
        <taxon>Pseudomonadati</taxon>
        <taxon>Chlorobiota</taxon>
        <taxon>Chlorobiia</taxon>
        <taxon>Chlorobiales</taxon>
        <taxon>Chlorobiaceae</taxon>
        <taxon>Chlorobium/Pelodictyon group</taxon>
        <taxon>Chlorobium</taxon>
    </lineage>
</organism>
<reference key="1">
    <citation type="submission" date="2005-08" db="EMBL/GenBank/DDBJ databases">
        <title>Complete sequence of Chlorobium chlorochromatii CaD3.</title>
        <authorList>
            <consortium name="US DOE Joint Genome Institute"/>
            <person name="Copeland A."/>
            <person name="Lucas S."/>
            <person name="Lapidus A."/>
            <person name="Barry K."/>
            <person name="Detter J.C."/>
            <person name="Glavina T."/>
            <person name="Hammon N."/>
            <person name="Israni S."/>
            <person name="Pitluck S."/>
            <person name="Bryant D."/>
            <person name="Schmutz J."/>
            <person name="Larimer F."/>
            <person name="Land M."/>
            <person name="Kyrpides N."/>
            <person name="Ivanova N."/>
            <person name="Richardson P."/>
        </authorList>
    </citation>
    <scope>NUCLEOTIDE SEQUENCE [LARGE SCALE GENOMIC DNA]</scope>
    <source>
        <strain>CaD3</strain>
    </source>
</reference>
<accession>Q3AS96</accession>
<name>RL21_CHLCH</name>
<sequence length="96" mass="10914">MQALITISDKQYLVKQGDKLFVPRQQAAIGDKLTIASLAQIDGANTTLQNSNSVQAVVLEHVKDEKVIVFKKKRRKRYQSRNGHRQQMTHIEVLSL</sequence>
<comment type="function">
    <text evidence="1">This protein binds to 23S rRNA in the presence of protein L20.</text>
</comment>
<comment type="subunit">
    <text evidence="1">Part of the 50S ribosomal subunit. Contacts protein L20.</text>
</comment>
<comment type="similarity">
    <text evidence="1">Belongs to the bacterial ribosomal protein bL21 family.</text>
</comment>
<gene>
    <name evidence="1" type="primary">rplU</name>
    <name type="ordered locus">Cag_0864</name>
</gene>